<protein>
    <recommendedName>
        <fullName evidence="1">Trigger factor</fullName>
        <shortName evidence="1">TF</shortName>
        <ecNumber evidence="1">5.2.1.8</ecNumber>
    </recommendedName>
    <alternativeName>
        <fullName evidence="1">PPIase</fullName>
    </alternativeName>
</protein>
<accession>A1KUE0</accession>
<gene>
    <name evidence="1" type="primary">tig</name>
    <name type="ordered locus">NMC1250</name>
</gene>
<organism>
    <name type="scientific">Neisseria meningitidis serogroup C / serotype 2a (strain ATCC 700532 / DSM 15464 / FAM18)</name>
    <dbReference type="NCBI Taxonomy" id="272831"/>
    <lineage>
        <taxon>Bacteria</taxon>
        <taxon>Pseudomonadati</taxon>
        <taxon>Pseudomonadota</taxon>
        <taxon>Betaproteobacteria</taxon>
        <taxon>Neisseriales</taxon>
        <taxon>Neisseriaceae</taxon>
        <taxon>Neisseria</taxon>
    </lineage>
</organism>
<evidence type="ECO:0000255" key="1">
    <source>
        <dbReference type="HAMAP-Rule" id="MF_00303"/>
    </source>
</evidence>
<reference key="1">
    <citation type="journal article" date="2007" name="PLoS Genet.">
        <title>Meningococcal genetic variation mechanisms viewed through comparative analysis of serogroup C strain FAM18.</title>
        <authorList>
            <person name="Bentley S.D."/>
            <person name="Vernikos G.S."/>
            <person name="Snyder L.A.S."/>
            <person name="Churcher C."/>
            <person name="Arrowsmith C."/>
            <person name="Chillingworth T."/>
            <person name="Cronin A."/>
            <person name="Davis P.H."/>
            <person name="Holroyd N.E."/>
            <person name="Jagels K."/>
            <person name="Maddison M."/>
            <person name="Moule S."/>
            <person name="Rabbinowitsch E."/>
            <person name="Sharp S."/>
            <person name="Unwin L."/>
            <person name="Whitehead S."/>
            <person name="Quail M.A."/>
            <person name="Achtman M."/>
            <person name="Barrell B.G."/>
            <person name="Saunders N.J."/>
            <person name="Parkhill J."/>
        </authorList>
    </citation>
    <scope>NUCLEOTIDE SEQUENCE [LARGE SCALE GENOMIC DNA]</scope>
    <source>
        <strain>ATCC 700532 / DSM 15464 / FAM18</strain>
    </source>
</reference>
<proteinExistence type="inferred from homology"/>
<name>TIG_NEIMF</name>
<sequence>MMSVTVETLENLERKVVLSLPWSEINAETDKKLKQTQRRAKIDGFRPGKAPLKMIAQMYGASAQNDVINELVQRRFHDVAVAQELKVAGFPRFEGVEEQDDKESFKVAAIFEVFPEVVIGDLSAQEVEKVTASVGDAEVDQTVEILRKQRTRFNHVEREARNSDRVIIDFEGKIDGEPFAGGASKNYAFVLGAGQMLPEFEAGVVGMKAGESKDVTVNFPEEYHGKDVAGKTAVFTITLNNVSEATLPEVDADFAKALGIADGDVAKMREEVQKNVSREVERRVNEQTKESVMNALLKAVELKAPVALVNEEAARLANEMKQNFVNQGMADAANLDLPLDIFKEQAERRVSLGLILAKLVDENKLEPTEEQVKAVVANFAESYEDPQEVIDWYYAEPSRLQAPTSLAIESNVVDFVLGKAKVNEKALSFDEVMGAQA</sequence>
<keyword id="KW-0131">Cell cycle</keyword>
<keyword id="KW-0132">Cell division</keyword>
<keyword id="KW-0143">Chaperone</keyword>
<keyword id="KW-0963">Cytoplasm</keyword>
<keyword id="KW-0413">Isomerase</keyword>
<keyword id="KW-0697">Rotamase</keyword>
<dbReference type="EC" id="5.2.1.8" evidence="1"/>
<dbReference type="EMBL" id="AM421808">
    <property type="protein sequence ID" value="CAM10483.1"/>
    <property type="molecule type" value="Genomic_DNA"/>
</dbReference>
<dbReference type="SMR" id="A1KUE0"/>
<dbReference type="KEGG" id="nmc:NMC1250"/>
<dbReference type="HOGENOM" id="CLU_033058_2_0_4"/>
<dbReference type="Proteomes" id="UP000002286">
    <property type="component" value="Chromosome"/>
</dbReference>
<dbReference type="GO" id="GO:0005737">
    <property type="term" value="C:cytoplasm"/>
    <property type="evidence" value="ECO:0007669"/>
    <property type="project" value="UniProtKB-SubCell"/>
</dbReference>
<dbReference type="GO" id="GO:0003755">
    <property type="term" value="F:peptidyl-prolyl cis-trans isomerase activity"/>
    <property type="evidence" value="ECO:0007669"/>
    <property type="project" value="UniProtKB-UniRule"/>
</dbReference>
<dbReference type="GO" id="GO:0044183">
    <property type="term" value="F:protein folding chaperone"/>
    <property type="evidence" value="ECO:0007669"/>
    <property type="project" value="TreeGrafter"/>
</dbReference>
<dbReference type="GO" id="GO:0043022">
    <property type="term" value="F:ribosome binding"/>
    <property type="evidence" value="ECO:0007669"/>
    <property type="project" value="TreeGrafter"/>
</dbReference>
<dbReference type="GO" id="GO:0051083">
    <property type="term" value="P:'de novo' cotranslational protein folding"/>
    <property type="evidence" value="ECO:0007669"/>
    <property type="project" value="TreeGrafter"/>
</dbReference>
<dbReference type="GO" id="GO:0051301">
    <property type="term" value="P:cell division"/>
    <property type="evidence" value="ECO:0007669"/>
    <property type="project" value="UniProtKB-KW"/>
</dbReference>
<dbReference type="GO" id="GO:0061077">
    <property type="term" value="P:chaperone-mediated protein folding"/>
    <property type="evidence" value="ECO:0007669"/>
    <property type="project" value="TreeGrafter"/>
</dbReference>
<dbReference type="GO" id="GO:0015031">
    <property type="term" value="P:protein transport"/>
    <property type="evidence" value="ECO:0007669"/>
    <property type="project" value="UniProtKB-UniRule"/>
</dbReference>
<dbReference type="GO" id="GO:0043335">
    <property type="term" value="P:protein unfolding"/>
    <property type="evidence" value="ECO:0007669"/>
    <property type="project" value="TreeGrafter"/>
</dbReference>
<dbReference type="FunFam" id="3.10.50.40:FF:000001">
    <property type="entry name" value="Trigger factor"/>
    <property type="match status" value="1"/>
</dbReference>
<dbReference type="FunFam" id="3.30.70.1050:FF:000007">
    <property type="entry name" value="Trigger factor"/>
    <property type="match status" value="1"/>
</dbReference>
<dbReference type="Gene3D" id="3.10.50.40">
    <property type="match status" value="1"/>
</dbReference>
<dbReference type="Gene3D" id="3.30.70.1050">
    <property type="entry name" value="Trigger factor ribosome-binding domain"/>
    <property type="match status" value="1"/>
</dbReference>
<dbReference type="Gene3D" id="1.10.3120.10">
    <property type="entry name" value="Trigger factor, C-terminal domain"/>
    <property type="match status" value="1"/>
</dbReference>
<dbReference type="HAMAP" id="MF_00303">
    <property type="entry name" value="Trigger_factor_Tig"/>
    <property type="match status" value="1"/>
</dbReference>
<dbReference type="InterPro" id="IPR046357">
    <property type="entry name" value="PPIase_dom_sf"/>
</dbReference>
<dbReference type="InterPro" id="IPR001179">
    <property type="entry name" value="PPIase_FKBP_dom"/>
</dbReference>
<dbReference type="InterPro" id="IPR005215">
    <property type="entry name" value="Trig_fac"/>
</dbReference>
<dbReference type="InterPro" id="IPR008880">
    <property type="entry name" value="Trigger_fac_C"/>
</dbReference>
<dbReference type="InterPro" id="IPR037041">
    <property type="entry name" value="Trigger_fac_C_sf"/>
</dbReference>
<dbReference type="InterPro" id="IPR008881">
    <property type="entry name" value="Trigger_fac_ribosome-bd_bac"/>
</dbReference>
<dbReference type="InterPro" id="IPR036611">
    <property type="entry name" value="Trigger_fac_ribosome-bd_sf"/>
</dbReference>
<dbReference type="InterPro" id="IPR027304">
    <property type="entry name" value="Trigger_fact/SurA_dom_sf"/>
</dbReference>
<dbReference type="NCBIfam" id="TIGR00115">
    <property type="entry name" value="tig"/>
    <property type="match status" value="1"/>
</dbReference>
<dbReference type="PANTHER" id="PTHR30560">
    <property type="entry name" value="TRIGGER FACTOR CHAPERONE AND PEPTIDYL-PROLYL CIS/TRANS ISOMERASE"/>
    <property type="match status" value="1"/>
</dbReference>
<dbReference type="PANTHER" id="PTHR30560:SF3">
    <property type="entry name" value="TRIGGER FACTOR-LIKE PROTEIN TIG, CHLOROPLASTIC"/>
    <property type="match status" value="1"/>
</dbReference>
<dbReference type="Pfam" id="PF00254">
    <property type="entry name" value="FKBP_C"/>
    <property type="match status" value="1"/>
</dbReference>
<dbReference type="Pfam" id="PF05698">
    <property type="entry name" value="Trigger_C"/>
    <property type="match status" value="1"/>
</dbReference>
<dbReference type="Pfam" id="PF05697">
    <property type="entry name" value="Trigger_N"/>
    <property type="match status" value="1"/>
</dbReference>
<dbReference type="PIRSF" id="PIRSF003095">
    <property type="entry name" value="Trigger_factor"/>
    <property type="match status" value="1"/>
</dbReference>
<dbReference type="SUPFAM" id="SSF54534">
    <property type="entry name" value="FKBP-like"/>
    <property type="match status" value="1"/>
</dbReference>
<dbReference type="SUPFAM" id="SSF109998">
    <property type="entry name" value="Triger factor/SurA peptide-binding domain-like"/>
    <property type="match status" value="1"/>
</dbReference>
<dbReference type="SUPFAM" id="SSF102735">
    <property type="entry name" value="Trigger factor ribosome-binding domain"/>
    <property type="match status" value="1"/>
</dbReference>
<dbReference type="PROSITE" id="PS50059">
    <property type="entry name" value="FKBP_PPIASE"/>
    <property type="match status" value="1"/>
</dbReference>
<feature type="chain" id="PRO_1000022718" description="Trigger factor">
    <location>
        <begin position="1"/>
        <end position="437"/>
    </location>
</feature>
<feature type="domain" description="PPIase FKBP-type" evidence="1">
    <location>
        <begin position="163"/>
        <end position="248"/>
    </location>
</feature>
<comment type="function">
    <text evidence="1">Involved in protein export. Acts as a chaperone by maintaining the newly synthesized protein in an open conformation. Functions as a peptidyl-prolyl cis-trans isomerase.</text>
</comment>
<comment type="catalytic activity">
    <reaction evidence="1">
        <text>[protein]-peptidylproline (omega=180) = [protein]-peptidylproline (omega=0)</text>
        <dbReference type="Rhea" id="RHEA:16237"/>
        <dbReference type="Rhea" id="RHEA-COMP:10747"/>
        <dbReference type="Rhea" id="RHEA-COMP:10748"/>
        <dbReference type="ChEBI" id="CHEBI:83833"/>
        <dbReference type="ChEBI" id="CHEBI:83834"/>
        <dbReference type="EC" id="5.2.1.8"/>
    </reaction>
</comment>
<comment type="subcellular location">
    <subcellularLocation>
        <location>Cytoplasm</location>
    </subcellularLocation>
    <text evidence="1">About half TF is bound to the ribosome near the polypeptide exit tunnel while the other half is free in the cytoplasm.</text>
</comment>
<comment type="domain">
    <text evidence="1">Consists of 3 domains; the N-terminus binds the ribosome, the middle domain has PPIase activity, while the C-terminus has intrinsic chaperone activity on its own.</text>
</comment>
<comment type="similarity">
    <text evidence="1">Belongs to the FKBP-type PPIase family. Tig subfamily.</text>
</comment>